<protein>
    <recommendedName>
        <fullName>Leucine-rich repeat and WD repeat-containing protein 1</fullName>
    </recommendedName>
    <alternativeName>
        <fullName>ORC-associated protein</fullName>
        <shortName>ORCA</shortName>
    </alternativeName>
    <alternativeName>
        <fullName>Origin recognition complex-associated protein</fullName>
    </alternativeName>
</protein>
<evidence type="ECO:0000250" key="1"/>
<evidence type="ECO:0000250" key="2">
    <source>
        <dbReference type="UniProtKB" id="Q8BUI3"/>
    </source>
</evidence>
<evidence type="ECO:0000250" key="3">
    <source>
        <dbReference type="UniProtKB" id="Q9UFC0"/>
    </source>
</evidence>
<evidence type="ECO:0000256" key="4">
    <source>
        <dbReference type="SAM" id="MobiDB-lite"/>
    </source>
</evidence>
<evidence type="ECO:0000305" key="5"/>
<gene>
    <name type="primary">lrwd1</name>
    <name type="synonym">orca</name>
</gene>
<organism>
    <name type="scientific">Xenopus tropicalis</name>
    <name type="common">Western clawed frog</name>
    <name type="synonym">Silurana tropicalis</name>
    <dbReference type="NCBI Taxonomy" id="8364"/>
    <lineage>
        <taxon>Eukaryota</taxon>
        <taxon>Metazoa</taxon>
        <taxon>Chordata</taxon>
        <taxon>Craniata</taxon>
        <taxon>Vertebrata</taxon>
        <taxon>Euteleostomi</taxon>
        <taxon>Amphibia</taxon>
        <taxon>Batrachia</taxon>
        <taxon>Anura</taxon>
        <taxon>Pipoidea</taxon>
        <taxon>Pipidae</taxon>
        <taxon>Xenopodinae</taxon>
        <taxon>Xenopus</taxon>
        <taxon>Silurana</taxon>
    </lineage>
</organism>
<dbReference type="EMBL" id="BC159054">
    <property type="protein sequence ID" value="AAI59055.1"/>
    <property type="molecule type" value="mRNA"/>
</dbReference>
<dbReference type="RefSeq" id="NP_001120130.1">
    <property type="nucleotide sequence ID" value="NM_001126658.1"/>
</dbReference>
<dbReference type="SMR" id="B0JZ65"/>
<dbReference type="FunCoup" id="B0JZ65">
    <property type="interactions" value="2013"/>
</dbReference>
<dbReference type="STRING" id="8364.ENSXETP00000054419"/>
<dbReference type="PaxDb" id="8364-ENSXETP00000012031"/>
<dbReference type="GeneID" id="100145159"/>
<dbReference type="KEGG" id="xtr:100145159"/>
<dbReference type="AGR" id="Xenbase:XB-GENE-959481"/>
<dbReference type="CTD" id="222229"/>
<dbReference type="Xenbase" id="XB-GENE-959481">
    <property type="gene designation" value="lrwd1"/>
</dbReference>
<dbReference type="eggNOG" id="KOG0619">
    <property type="taxonomic scope" value="Eukaryota"/>
</dbReference>
<dbReference type="InParanoid" id="B0JZ65"/>
<dbReference type="OrthoDB" id="7318948at2759"/>
<dbReference type="Proteomes" id="UP000008143">
    <property type="component" value="Chromosome 2"/>
</dbReference>
<dbReference type="Bgee" id="ENSXETG00000005472">
    <property type="expression patterns" value="Expressed in gastrula and 15 other cell types or tissues"/>
</dbReference>
<dbReference type="GO" id="GO:0005813">
    <property type="term" value="C:centrosome"/>
    <property type="evidence" value="ECO:0007669"/>
    <property type="project" value="UniProtKB-SubCell"/>
</dbReference>
<dbReference type="GO" id="GO:0000781">
    <property type="term" value="C:chromosome, telomeric region"/>
    <property type="evidence" value="ECO:0000250"/>
    <property type="project" value="UniProtKB"/>
</dbReference>
<dbReference type="GO" id="GO:0005737">
    <property type="term" value="C:cytoplasm"/>
    <property type="evidence" value="ECO:0007669"/>
    <property type="project" value="UniProtKB-KW"/>
</dbReference>
<dbReference type="GO" id="GO:0000776">
    <property type="term" value="C:kinetochore"/>
    <property type="evidence" value="ECO:0000250"/>
    <property type="project" value="UniProtKB"/>
</dbReference>
<dbReference type="GO" id="GO:0005664">
    <property type="term" value="C:nuclear origin of replication recognition complex"/>
    <property type="evidence" value="ECO:0000250"/>
    <property type="project" value="UniProtKB"/>
</dbReference>
<dbReference type="GO" id="GO:0005634">
    <property type="term" value="C:nucleus"/>
    <property type="evidence" value="ECO:0000250"/>
    <property type="project" value="UniProtKB"/>
</dbReference>
<dbReference type="GO" id="GO:0005721">
    <property type="term" value="C:pericentric heterochromatin"/>
    <property type="evidence" value="ECO:0000250"/>
    <property type="project" value="UniProtKB"/>
</dbReference>
<dbReference type="GO" id="GO:0003682">
    <property type="term" value="F:chromatin binding"/>
    <property type="evidence" value="ECO:0000250"/>
    <property type="project" value="UniProtKB"/>
</dbReference>
<dbReference type="GO" id="GO:0061628">
    <property type="term" value="F:histone H3K27me3 reader activity"/>
    <property type="evidence" value="ECO:0000250"/>
    <property type="project" value="UniProtKB"/>
</dbReference>
<dbReference type="GO" id="GO:0008327">
    <property type="term" value="F:methyl-CpG binding"/>
    <property type="evidence" value="ECO:0000250"/>
    <property type="project" value="UniProtKB"/>
</dbReference>
<dbReference type="GO" id="GO:0006325">
    <property type="term" value="P:chromatin organization"/>
    <property type="evidence" value="ECO:0000250"/>
    <property type="project" value="UniProtKB"/>
</dbReference>
<dbReference type="GO" id="GO:0006260">
    <property type="term" value="P:DNA replication"/>
    <property type="evidence" value="ECO:0007669"/>
    <property type="project" value="UniProtKB-KW"/>
</dbReference>
<dbReference type="GO" id="GO:0071169">
    <property type="term" value="P:establishment of protein localization to chromatin"/>
    <property type="evidence" value="ECO:0000250"/>
    <property type="project" value="UniProtKB"/>
</dbReference>
<dbReference type="FunFam" id="2.130.10.10:FF:000488">
    <property type="entry name" value="Leucine-rich repeat and WD repeat-containing protein 1"/>
    <property type="match status" value="1"/>
</dbReference>
<dbReference type="FunFam" id="3.80.10.10:FF:000429">
    <property type="entry name" value="Leucine-rich repeat and WD repeat-containing protein 1"/>
    <property type="match status" value="1"/>
</dbReference>
<dbReference type="Gene3D" id="3.80.10.10">
    <property type="entry name" value="Ribonuclease Inhibitor"/>
    <property type="match status" value="1"/>
</dbReference>
<dbReference type="Gene3D" id="2.130.10.10">
    <property type="entry name" value="YVTN repeat-like/Quinoprotein amine dehydrogenase"/>
    <property type="match status" value="1"/>
</dbReference>
<dbReference type="InterPro" id="IPR001611">
    <property type="entry name" value="Leu-rich_rpt"/>
</dbReference>
<dbReference type="InterPro" id="IPR032675">
    <property type="entry name" value="LRR_dom_sf"/>
</dbReference>
<dbReference type="InterPro" id="IPR056363">
    <property type="entry name" value="LRR_LRWD1_dom"/>
</dbReference>
<dbReference type="InterPro" id="IPR052489">
    <property type="entry name" value="LRWD1"/>
</dbReference>
<dbReference type="InterPro" id="IPR015943">
    <property type="entry name" value="WD40/YVTN_repeat-like_dom_sf"/>
</dbReference>
<dbReference type="InterPro" id="IPR019775">
    <property type="entry name" value="WD40_repeat_CS"/>
</dbReference>
<dbReference type="InterPro" id="IPR036322">
    <property type="entry name" value="WD40_repeat_dom_sf"/>
</dbReference>
<dbReference type="InterPro" id="IPR001680">
    <property type="entry name" value="WD40_rpt"/>
</dbReference>
<dbReference type="InterPro" id="IPR056160">
    <property type="entry name" value="WD_LRWD1"/>
</dbReference>
<dbReference type="PANTHER" id="PTHR24370:SF10">
    <property type="entry name" value="LEUCINE-RICH REPEAT AND WD REPEAT-CONTAINING PROTEIN 1"/>
    <property type="match status" value="1"/>
</dbReference>
<dbReference type="PANTHER" id="PTHR24370">
    <property type="entry name" value="OPTICIN"/>
    <property type="match status" value="1"/>
</dbReference>
<dbReference type="Pfam" id="PF23211">
    <property type="entry name" value="LRR_LRWD1"/>
    <property type="match status" value="1"/>
</dbReference>
<dbReference type="Pfam" id="PF23215">
    <property type="entry name" value="WD_LRWD1"/>
    <property type="match status" value="1"/>
</dbReference>
<dbReference type="SMART" id="SM00320">
    <property type="entry name" value="WD40"/>
    <property type="match status" value="4"/>
</dbReference>
<dbReference type="SUPFAM" id="SSF52058">
    <property type="entry name" value="L domain-like"/>
    <property type="match status" value="1"/>
</dbReference>
<dbReference type="SUPFAM" id="SSF50978">
    <property type="entry name" value="WD40 repeat-like"/>
    <property type="match status" value="1"/>
</dbReference>
<dbReference type="PROSITE" id="PS51450">
    <property type="entry name" value="LRR"/>
    <property type="match status" value="2"/>
</dbReference>
<dbReference type="PROSITE" id="PS00678">
    <property type="entry name" value="WD_REPEATS_1"/>
    <property type="match status" value="1"/>
</dbReference>
<dbReference type="PROSITE" id="PS50082">
    <property type="entry name" value="WD_REPEATS_2"/>
    <property type="match status" value="1"/>
</dbReference>
<dbReference type="PROSITE" id="PS50294">
    <property type="entry name" value="WD_REPEATS_REGION"/>
    <property type="match status" value="1"/>
</dbReference>
<feature type="chain" id="PRO_0000403770" description="Leucine-rich repeat and WD repeat-containing protein 1">
    <location>
        <begin position="1"/>
        <end position="691"/>
    </location>
</feature>
<feature type="repeat" description="LRR 1">
    <location>
        <begin position="22"/>
        <end position="45"/>
    </location>
</feature>
<feature type="repeat" description="LRR 2">
    <location>
        <begin position="48"/>
        <end position="69"/>
    </location>
</feature>
<feature type="repeat" description="LRR 3">
    <location>
        <begin position="70"/>
        <end position="91"/>
    </location>
</feature>
<feature type="repeat" description="WD 1">
    <location>
        <begin position="426"/>
        <end position="466"/>
    </location>
</feature>
<feature type="repeat" description="WD 2">
    <location>
        <begin position="476"/>
        <end position="516"/>
    </location>
</feature>
<feature type="repeat" description="WD 3">
    <location>
        <begin position="535"/>
        <end position="574"/>
    </location>
</feature>
<feature type="repeat" description="WD 4">
    <location>
        <begin position="593"/>
        <end position="632"/>
    </location>
</feature>
<feature type="repeat" description="WD 5">
    <location>
        <begin position="659"/>
        <end position="691"/>
    </location>
</feature>
<feature type="region of interest" description="Disordered" evidence="4">
    <location>
        <begin position="202"/>
        <end position="291"/>
    </location>
</feature>
<feature type="compositionally biased region" description="Polar residues" evidence="4">
    <location>
        <begin position="255"/>
        <end position="264"/>
    </location>
</feature>
<feature type="compositionally biased region" description="Polar residues" evidence="4">
    <location>
        <begin position="276"/>
        <end position="291"/>
    </location>
</feature>
<reference key="1">
    <citation type="submission" date="2008-02" db="EMBL/GenBank/DDBJ databases">
        <authorList>
            <consortium name="NIH - Xenopus Gene Collection (XGC) project"/>
        </authorList>
    </citation>
    <scope>NUCLEOTIDE SEQUENCE [LARGE SCALE MRNA]</scope>
    <source>
        <tissue>Embryo</tissue>
    </source>
</reference>
<proteinExistence type="evidence at transcript level"/>
<comment type="function">
    <text evidence="1">Required for G1/S transition. Recruits and stabilizes the origin recognition complex (ORC) onto chromatin during G1 to establish pre-replication complex (preRC) and to heterochromatic sites in post-replicated cells. Binds a combination of DNA and histone methylation repressive marks on heterochromatin. Required for silencing of major satellite repeats. May be important ORC2, ORC3 and ORC4 stability (By similarity).</text>
</comment>
<comment type="subunit">
    <text evidence="1">Component of the ORC complex.</text>
</comment>
<comment type="subcellular location">
    <subcellularLocation>
        <location evidence="3">Nucleus</location>
    </subcellularLocation>
    <subcellularLocation>
        <location evidence="3">Chromosome</location>
        <location evidence="3">Centromere</location>
    </subcellularLocation>
    <subcellularLocation>
        <location evidence="3">Chromosome</location>
        <location evidence="3">Telomere</location>
    </subcellularLocation>
    <subcellularLocation>
        <location evidence="2">Cytoplasm</location>
        <location evidence="2">Cytoskeleton</location>
        <location evidence="2">Microtubule organizing center</location>
        <location evidence="2">Centrosome</location>
    </subcellularLocation>
    <subcellularLocation>
        <location evidence="3">Chromosome</location>
        <location evidence="3">Centromere</location>
        <location evidence="3">Kinetochore</location>
    </subcellularLocation>
</comment>
<comment type="domain">
    <text evidence="1">The entire WD repeat region is required for the interaction with ORC complex components, as well as for association with chromatin and for binding to histone methylation marks.</text>
</comment>
<comment type="similarity">
    <text evidence="5">Belongs to the LRWD1 family.</text>
</comment>
<sequence>MSKITADVLLKEGLPKSIHLKDLKKLNLSKMHLEMKDIDPKLFSQMVNLDELDISHNTLSELPDNLGLHNLRILNFADNHVEDVTVLKQFPNLEEVIYEDNIYLTVSDNYKVFCLLPKLRRLNNKDITSLANHVRFVNHRELSNRVEAHWDSKFKDNLPDKPSSQKINAVAKDFIKSVVNNIKYGPSSLKEFVRWKALGCSGKKRDSADDCTEGSPTKRTRIQHELQSIPLSPRKSNRLQNSPLSLTPIKRKQETSTQGTPSKSTETKSPKVALKSTPSKKQSNESSAKINGKQKLSLTPKIIQKALDNIEPLHFLQCHSKNNSCEDFKTQLWACAFEPILDSSSPKAVATCGGDSVCIIDCETGKVMKKYKVTGEEFFTLVWTTLTMIGKDEQKRKINVLAAGGKHGVVRIIHAKVSLCYGEIKAHKKAISIMCFSPKQDTFLFTGSYDKRIILWDIGVPDCDYNFRPSQLLTLDTTSVPLRMCLVPSCPDEFLVAACEDGCFAWDIRLDKKQGRRSYEVELNFPIYKEERKDNDFHVIDSLAFLNEDIIASKSVMQGSIYLWSWEKTLKTRKTKNVKKLDAVILAQMKWSSSETPYLVLSTSPERYCVFCGDEDGKIWIYDLDSCKADLQRGKLCSVVKEPTKILSWPILFSPKEKVEKTLINVVTVDPTMEYLVALTDINIVSIWKIK</sequence>
<accession>B0JZ65</accession>
<name>LRWD1_XENTR</name>
<keyword id="KW-0137">Centromere</keyword>
<keyword id="KW-0156">Chromatin regulator</keyword>
<keyword id="KW-0158">Chromosome</keyword>
<keyword id="KW-0963">Cytoplasm</keyword>
<keyword id="KW-0206">Cytoskeleton</keyword>
<keyword id="KW-0235">DNA replication</keyword>
<keyword id="KW-0995">Kinetochore</keyword>
<keyword id="KW-0433">Leucine-rich repeat</keyword>
<keyword id="KW-0539">Nucleus</keyword>
<keyword id="KW-1185">Reference proteome</keyword>
<keyword id="KW-0677">Repeat</keyword>
<keyword id="KW-0779">Telomere</keyword>
<keyword id="KW-0853">WD repeat</keyword>